<reference key="1">
    <citation type="journal article" date="2009" name="Bioorg. Med. Chem. Lett.">
        <title>Functional analyses of cytochrome P450 genes responsible for the early steps of brassicicene C biosynthesis.</title>
        <authorList>
            <person name="Hashimoto M."/>
            <person name="Higuchi Y."/>
            <person name="Takahashi S."/>
            <person name="Osada H."/>
            <person name="Sakaki T."/>
            <person name="Toyomasu T."/>
            <person name="Sassa T."/>
            <person name="Kato N."/>
            <person name="Dairi T."/>
        </authorList>
    </citation>
    <scope>NUCLEOTIDE SEQUENCE [MRNA]</scope>
    <scope>FUNCTION</scope>
    <scope>PATHWAY</scope>
    <source>
        <strain>ATCC 96836</strain>
    </source>
</reference>
<reference key="2">
    <citation type="journal article" date="2009" name="Bioorg. Med. Chem. Lett.">
        <title>Identification and functional analysis of brassicicene C biosynthetic gene cluster in Alternaria brassicicola.</title>
        <authorList>
            <person name="Minami A."/>
            <person name="Tajima N."/>
            <person name="Higuchi Y."/>
            <person name="Toyomasu T."/>
            <person name="Sassa T."/>
            <person name="Kato N."/>
            <person name="Dairi T."/>
        </authorList>
    </citation>
    <scope>FUNCTION</scope>
</reference>
<reference key="3">
    <citation type="journal article" date="2011" name="J. Am. Chem. Soc.">
        <title>Dioxygenases, key enzymes to determine the aglycon structures of fusicoccin and brassicicene, diterpene compounds produced by fungi.</title>
        <authorList>
            <person name="Ono Y."/>
            <person name="Minami A."/>
            <person name="Noike M."/>
            <person name="Higuchi Y."/>
            <person name="Toyomasu T."/>
            <person name="Sassa T."/>
            <person name="Kato N."/>
            <person name="Dairi T."/>
        </authorList>
    </citation>
    <scope>FUNCTION</scope>
</reference>
<evidence type="ECO:0000250" key="1">
    <source>
        <dbReference type="UniProtKB" id="P04798"/>
    </source>
</evidence>
<evidence type="ECO:0000255" key="2"/>
<evidence type="ECO:0000255" key="3">
    <source>
        <dbReference type="PROSITE-ProRule" id="PRU00498"/>
    </source>
</evidence>
<evidence type="ECO:0000269" key="4">
    <source>
    </source>
</evidence>
<evidence type="ECO:0000269" key="5">
    <source>
    </source>
</evidence>
<evidence type="ECO:0000269" key="6">
    <source>
    </source>
</evidence>
<evidence type="ECO:0000303" key="7">
    <source>
    </source>
</evidence>
<evidence type="ECO:0000305" key="8"/>
<evidence type="ECO:0000305" key="9">
    <source>
    </source>
</evidence>
<evidence type="ECO:0000305" key="10">
    <source>
    </source>
</evidence>
<sequence length="523" mass="60169">MLEGTLQDCWTSISKMQLHWTVLGLLPVLFIAILGPRVRQIWVNYVHLTKIPSPHKKDYFCFVTETTRAEFLNECARLLRKGFASGDVIRLHASWDHIVVLSPSYAECLRADEKFSPDTFSDKEMFGAVPGFEPYRFLCTHRDLVRNVISMRLNRCFVPATRYLSEAIDDALRKQMGNDSEWREVPLGNAVLKILTQSSFRALQGPELCYDDEWLDIATQYIVTSVTGVTALRKLPKFLVPLIHWFHPDAIKSRRLLSRARAKLIPFYEKRKKELYQARRNGTYRPEDADAFGWYEELADGRDYDPVVAQLTVAVAATHSTTDFMCQFLSDMVRYPEYIQPLRDELILALKEKGWKASTILQLPLLDSVMKESQRLKPVAMGFMRSIAQHDVYLQDAVKIPKNASVIVSAHSMRDATVYENPDSFDGYRFINPTKHPESRHFTSVSVNHMGFGFGKHACPGRFFVNLETKILIAHLLLKYDWKFANDGCPAIRTSGFDQVVDPSAKMLVRRRKEEIRIEALYE</sequence>
<comment type="function">
    <text evidence="4 5 6 9">Cytochrome P450 monooxygenase; part of the gene cluster that mediates the biosynthesis of the diterpene glucoside brassicicene C (PubMed:19097780). In the first step of the brassicicene C biosynthesis, the bifunctional diterpene synthase bsc8 that possesses both prenyl transferase and terpene cyclase activity, converts isopentenyl diphosphate and dimethylallyl diphosphate into geranylgeranyl diphosphate (GGDP) that is further converted into fusicocca-2,10(14)-diene, the first precursor for brassicicene C (PubMed:19097780). Fusicocca-2,10(14)-diene is then substrate of cytochrome P450 monooxygenase bsc1 for hydroxylation at the C-8 position (PubMed:19700326). Oxidation at C-16 position to aldehyde is then catalyzed by the cytochrome P450 monooyxygenase bsc7, yielding fusicocca-2,10(14)-diene-8-beta,16-diol (PubMed:19700326). Follows the isomerization of the double bond and reduction of aldehyde to alcohol catalyzed by the short-chain dehydrogenase/reductase bsc3 to yield the diol compound fusicocca-1,10(14)-diene-8 beta,16-diol (Probable). The next step is the oxidation at the C-3 position of fusicocca-2,10(14)-diene-8-beta,16-diol catalyzed by the alpha-ketoglutarate dependent dioxygenase bsc9, to produce a triol compound (PubMed:21299202). Methylation of the hydroxy group at position 16 is performed by the methyltransferase bsc6 (PubMed:19097780). 16-O-methylation is followed by oxidation at the C-13 position to ketone and an alkyl shift of the methyl group leads to brassicicene C (Probable). Although the probable acetyltransferase bsc4 is included in the gene cluster, no acetylation reactions are necessary for brassicicene C biosynthesis. However, the fact that brassicicene E, which is a structurally related compound having an acetoxy group at position 12, was previously isolated from another strain of A.brassicicola suggests that the ATCC 96836 strain might also produce a small amount of brassicicene E (Probable).</text>
</comment>
<comment type="cofactor">
    <cofactor evidence="1">
        <name>heme</name>
        <dbReference type="ChEBI" id="CHEBI:30413"/>
    </cofactor>
</comment>
<comment type="pathway">
    <text evidence="10">Mycotoxin biosynthesis.</text>
</comment>
<comment type="subcellular location">
    <subcellularLocation>
        <location evidence="2">Membrane</location>
        <topology evidence="2">Single-pass membrane protein</topology>
    </subcellularLocation>
</comment>
<comment type="similarity">
    <text evidence="8">Belongs to the cytochrome P450 family.</text>
</comment>
<feature type="chain" id="PRO_0000445453" description="Cytochrome P450 monooxygenase bsc5">
    <location>
        <begin position="1"/>
        <end position="523"/>
    </location>
</feature>
<feature type="transmembrane region" description="Helical" evidence="2">
    <location>
        <begin position="16"/>
        <end position="36"/>
    </location>
</feature>
<feature type="binding site" description="axial binding residue" evidence="1">
    <location>
        <position position="459"/>
    </location>
    <ligand>
        <name>heme</name>
        <dbReference type="ChEBI" id="CHEBI:30413"/>
    </ligand>
    <ligandPart>
        <name>Fe</name>
        <dbReference type="ChEBI" id="CHEBI:18248"/>
    </ligandPart>
</feature>
<feature type="glycosylation site" description="N-linked (GlcNAc...) asparagine" evidence="3">
    <location>
        <position position="178"/>
    </location>
</feature>
<feature type="glycosylation site" description="N-linked (GlcNAc...) asparagine" evidence="3">
    <location>
        <position position="281"/>
    </location>
</feature>
<feature type="glycosylation site" description="N-linked (GlcNAc...) asparagine" evidence="3">
    <location>
        <position position="403"/>
    </location>
</feature>
<proteinExistence type="evidence at transcript level"/>
<protein>
    <recommendedName>
        <fullName evidence="7">Cytochrome P450 monooxygenase bsc5</fullName>
        <ecNumber evidence="10">1.-.-.-</ecNumber>
    </recommendedName>
    <alternativeName>
        <fullName evidence="7">Brassicicene C biosynthetic gene cluster protein 5</fullName>
    </alternativeName>
</protein>
<dbReference type="EC" id="1.-.-.-" evidence="10"/>
<dbReference type="EMBL" id="AB506080">
    <property type="protein sequence ID" value="BAI52802.1"/>
    <property type="molecule type" value="mRNA"/>
</dbReference>
<dbReference type="SMR" id="D1MX87"/>
<dbReference type="GlyCosmos" id="D1MX87">
    <property type="glycosylation" value="3 sites, No reported glycans"/>
</dbReference>
<dbReference type="GO" id="GO:0016020">
    <property type="term" value="C:membrane"/>
    <property type="evidence" value="ECO:0007669"/>
    <property type="project" value="UniProtKB-SubCell"/>
</dbReference>
<dbReference type="GO" id="GO:0020037">
    <property type="term" value="F:heme binding"/>
    <property type="evidence" value="ECO:0007669"/>
    <property type="project" value="InterPro"/>
</dbReference>
<dbReference type="GO" id="GO:0005506">
    <property type="term" value="F:iron ion binding"/>
    <property type="evidence" value="ECO:0007669"/>
    <property type="project" value="InterPro"/>
</dbReference>
<dbReference type="GO" id="GO:0004497">
    <property type="term" value="F:monooxygenase activity"/>
    <property type="evidence" value="ECO:0007669"/>
    <property type="project" value="UniProtKB-KW"/>
</dbReference>
<dbReference type="GO" id="GO:0016705">
    <property type="term" value="F:oxidoreductase activity, acting on paired donors, with incorporation or reduction of molecular oxygen"/>
    <property type="evidence" value="ECO:0007669"/>
    <property type="project" value="InterPro"/>
</dbReference>
<dbReference type="GO" id="GO:0019748">
    <property type="term" value="P:secondary metabolic process"/>
    <property type="evidence" value="ECO:0007669"/>
    <property type="project" value="UniProtKB-ARBA"/>
</dbReference>
<dbReference type="CDD" id="cd11041">
    <property type="entry name" value="CYP503A1-like"/>
    <property type="match status" value="1"/>
</dbReference>
<dbReference type="Gene3D" id="1.10.630.10">
    <property type="entry name" value="Cytochrome P450"/>
    <property type="match status" value="1"/>
</dbReference>
<dbReference type="InterPro" id="IPR001128">
    <property type="entry name" value="Cyt_P450"/>
</dbReference>
<dbReference type="InterPro" id="IPR017972">
    <property type="entry name" value="Cyt_P450_CS"/>
</dbReference>
<dbReference type="InterPro" id="IPR002403">
    <property type="entry name" value="Cyt_P450_E_grp-IV"/>
</dbReference>
<dbReference type="InterPro" id="IPR036396">
    <property type="entry name" value="Cyt_P450_sf"/>
</dbReference>
<dbReference type="PANTHER" id="PTHR46206">
    <property type="entry name" value="CYTOCHROME P450"/>
    <property type="match status" value="1"/>
</dbReference>
<dbReference type="PANTHER" id="PTHR46206:SF2">
    <property type="entry name" value="CYTOCHROME P450 MONOOXYGENASE AUSG-RELATED"/>
    <property type="match status" value="1"/>
</dbReference>
<dbReference type="Pfam" id="PF00067">
    <property type="entry name" value="p450"/>
    <property type="match status" value="1"/>
</dbReference>
<dbReference type="PRINTS" id="PR00465">
    <property type="entry name" value="EP450IV"/>
</dbReference>
<dbReference type="SUPFAM" id="SSF48264">
    <property type="entry name" value="Cytochrome P450"/>
    <property type="match status" value="1"/>
</dbReference>
<dbReference type="PROSITE" id="PS00086">
    <property type="entry name" value="CYTOCHROME_P450"/>
    <property type="match status" value="1"/>
</dbReference>
<name>BSC5_ALTBR</name>
<gene>
    <name evidence="8" type="primary">bsc5</name>
    <name evidence="7" type="synonym">orf5</name>
</gene>
<accession>D1MX87</accession>
<keyword id="KW-0325">Glycoprotein</keyword>
<keyword id="KW-0349">Heme</keyword>
<keyword id="KW-0408">Iron</keyword>
<keyword id="KW-0472">Membrane</keyword>
<keyword id="KW-0479">Metal-binding</keyword>
<keyword id="KW-0503">Monooxygenase</keyword>
<keyword id="KW-0560">Oxidoreductase</keyword>
<keyword id="KW-0812">Transmembrane</keyword>
<keyword id="KW-1133">Transmembrane helix</keyword>
<organism>
    <name type="scientific">Alternaria brassicicola</name>
    <name type="common">Dark leaf spot agent</name>
    <dbReference type="NCBI Taxonomy" id="29001"/>
    <lineage>
        <taxon>Eukaryota</taxon>
        <taxon>Fungi</taxon>
        <taxon>Dikarya</taxon>
        <taxon>Ascomycota</taxon>
        <taxon>Pezizomycotina</taxon>
        <taxon>Dothideomycetes</taxon>
        <taxon>Pleosporomycetidae</taxon>
        <taxon>Pleosporales</taxon>
        <taxon>Pleosporineae</taxon>
        <taxon>Pleosporaceae</taxon>
        <taxon>Alternaria</taxon>
        <taxon>Alternaria sect. Brassicicola</taxon>
    </lineage>
</organism>